<protein>
    <recommendedName>
        <fullName evidence="1">Chaperonin GroEL</fullName>
        <ecNumber evidence="1">5.6.1.7</ecNumber>
    </recommendedName>
    <alternativeName>
        <fullName evidence="1">60 kDa chaperonin</fullName>
    </alternativeName>
    <alternativeName>
        <fullName evidence="1">Chaperonin-60</fullName>
        <shortName evidence="1">Cpn60</shortName>
    </alternativeName>
</protein>
<proteinExistence type="inferred from homology"/>
<evidence type="ECO:0000255" key="1">
    <source>
        <dbReference type="HAMAP-Rule" id="MF_00600"/>
    </source>
</evidence>
<accession>C4Z3R4</accession>
<reference key="1">
    <citation type="journal article" date="2009" name="Proc. Natl. Acad. Sci. U.S.A.">
        <title>Characterizing a model human gut microbiota composed of members of its two dominant bacterial phyla.</title>
        <authorList>
            <person name="Mahowald M.A."/>
            <person name="Rey F.E."/>
            <person name="Seedorf H."/>
            <person name="Turnbaugh P.J."/>
            <person name="Fulton R.S."/>
            <person name="Wollam A."/>
            <person name="Shah N."/>
            <person name="Wang C."/>
            <person name="Magrini V."/>
            <person name="Wilson R.K."/>
            <person name="Cantarel B.L."/>
            <person name="Coutinho P.M."/>
            <person name="Henrissat B."/>
            <person name="Crock L.W."/>
            <person name="Russell A."/>
            <person name="Verberkmoes N.C."/>
            <person name="Hettich R.L."/>
            <person name="Gordon J.I."/>
        </authorList>
    </citation>
    <scope>NUCLEOTIDE SEQUENCE [LARGE SCALE GENOMIC DNA]</scope>
    <source>
        <strain>ATCC 27750 / DSM 3376 / VPI C15-48 / C15-B4</strain>
    </source>
</reference>
<keyword id="KW-0067">ATP-binding</keyword>
<keyword id="KW-0143">Chaperone</keyword>
<keyword id="KW-0963">Cytoplasm</keyword>
<keyword id="KW-0413">Isomerase</keyword>
<keyword id="KW-0547">Nucleotide-binding</keyword>
<keyword id="KW-1185">Reference proteome</keyword>
<organism>
    <name type="scientific">Lachnospira eligens (strain ATCC 27750 / DSM 3376 / VPI C15-48 / C15-B4)</name>
    <name type="common">Eubacterium eligens</name>
    <dbReference type="NCBI Taxonomy" id="515620"/>
    <lineage>
        <taxon>Bacteria</taxon>
        <taxon>Bacillati</taxon>
        <taxon>Bacillota</taxon>
        <taxon>Clostridia</taxon>
        <taxon>Lachnospirales</taxon>
        <taxon>Lachnospiraceae</taxon>
        <taxon>Lachnospira</taxon>
    </lineage>
</organism>
<sequence length="541" mass="57396">MAKEIKYGIEARKALEEGVNKLANTVRVTIGPKGRNVVLDKSYGAPLITNDGVTIAKDIELEDAFENMGAQLVKEVAAKTNDVAGDGTTTATVLAQAMINEGMKNLAAGANPIVLRKGMKKATDCAVEAIAGMSEKVTGKDQIAKVAAISAGDEEVGQMVADAMEKVSNDGVITIEESKTMKTELDLVEGMQFDRGYISAYMATDMDKMEAVLDNPYILITDKKISNIQEILPVLEQIVQSGAKLLIIAEDVEGEALTTLIVNKLRGTFNVVAVKAPGYGDRRKEMLKDIAILTGGQVISEELGLELKDTTMDMLGRAKSVKVQKENTVIVDGEGAKEDIDARVAQIKAQLEETTSEFDKEKLQERLAKLAGGVAVIRVGAATETEMKEAKLRMEDALNATRAAVEEGVVSGGGSAYIHASKKVAELVKTLSGDEKIGAQIILKALEAPLFHIAYNAGLEGAVIINKVRESEVGTGFDAYKEEYVNMIDAGILDPAKVTRSALQNATSVASTLLTTESVVANIKEDAPAMPAGGAGMGGMM</sequence>
<comment type="function">
    <text evidence="1">Together with its co-chaperonin GroES, plays an essential role in assisting protein folding. The GroEL-GroES system forms a nano-cage that allows encapsulation of the non-native substrate proteins and provides a physical environment optimized to promote and accelerate protein folding.</text>
</comment>
<comment type="catalytic activity">
    <reaction evidence="1">
        <text>ATP + H2O + a folded polypeptide = ADP + phosphate + an unfolded polypeptide.</text>
        <dbReference type="EC" id="5.6.1.7"/>
    </reaction>
</comment>
<comment type="subunit">
    <text evidence="1">Forms a cylinder of 14 subunits composed of two heptameric rings stacked back-to-back. Interacts with the co-chaperonin GroES.</text>
</comment>
<comment type="subcellular location">
    <subcellularLocation>
        <location evidence="1">Cytoplasm</location>
    </subcellularLocation>
</comment>
<comment type="similarity">
    <text evidence="1">Belongs to the chaperonin (HSP60) family.</text>
</comment>
<gene>
    <name evidence="1" type="primary">groEL</name>
    <name evidence="1" type="synonym">groL</name>
    <name type="ordered locus">EUBELI_00520</name>
</gene>
<feature type="chain" id="PRO_1000212197" description="Chaperonin GroEL">
    <location>
        <begin position="1"/>
        <end position="541"/>
    </location>
</feature>
<feature type="binding site" evidence="1">
    <location>
        <begin position="29"/>
        <end position="32"/>
    </location>
    <ligand>
        <name>ATP</name>
        <dbReference type="ChEBI" id="CHEBI:30616"/>
    </ligand>
</feature>
<feature type="binding site" evidence="1">
    <location>
        <begin position="86"/>
        <end position="90"/>
    </location>
    <ligand>
        <name>ATP</name>
        <dbReference type="ChEBI" id="CHEBI:30616"/>
    </ligand>
</feature>
<feature type="binding site" evidence="1">
    <location>
        <position position="413"/>
    </location>
    <ligand>
        <name>ATP</name>
        <dbReference type="ChEBI" id="CHEBI:30616"/>
    </ligand>
</feature>
<feature type="binding site" evidence="1">
    <location>
        <position position="494"/>
    </location>
    <ligand>
        <name>ATP</name>
        <dbReference type="ChEBI" id="CHEBI:30616"/>
    </ligand>
</feature>
<dbReference type="EC" id="5.6.1.7" evidence="1"/>
<dbReference type="EMBL" id="CP001104">
    <property type="protein sequence ID" value="ACR71533.1"/>
    <property type="molecule type" value="Genomic_DNA"/>
</dbReference>
<dbReference type="RefSeq" id="WP_012738769.1">
    <property type="nucleotide sequence ID" value="NC_012778.1"/>
</dbReference>
<dbReference type="SMR" id="C4Z3R4"/>
<dbReference type="STRING" id="515620.EUBELI_00520"/>
<dbReference type="GeneID" id="41355281"/>
<dbReference type="KEGG" id="eel:EUBELI_00520"/>
<dbReference type="eggNOG" id="COG0459">
    <property type="taxonomic scope" value="Bacteria"/>
</dbReference>
<dbReference type="HOGENOM" id="CLU_016503_3_0_9"/>
<dbReference type="Proteomes" id="UP000001476">
    <property type="component" value="Chromosome"/>
</dbReference>
<dbReference type="GO" id="GO:0005737">
    <property type="term" value="C:cytoplasm"/>
    <property type="evidence" value="ECO:0007669"/>
    <property type="project" value="UniProtKB-SubCell"/>
</dbReference>
<dbReference type="GO" id="GO:0005524">
    <property type="term" value="F:ATP binding"/>
    <property type="evidence" value="ECO:0007669"/>
    <property type="project" value="UniProtKB-UniRule"/>
</dbReference>
<dbReference type="GO" id="GO:0140662">
    <property type="term" value="F:ATP-dependent protein folding chaperone"/>
    <property type="evidence" value="ECO:0007669"/>
    <property type="project" value="InterPro"/>
</dbReference>
<dbReference type="GO" id="GO:0016853">
    <property type="term" value="F:isomerase activity"/>
    <property type="evidence" value="ECO:0007669"/>
    <property type="project" value="UniProtKB-KW"/>
</dbReference>
<dbReference type="GO" id="GO:0051082">
    <property type="term" value="F:unfolded protein binding"/>
    <property type="evidence" value="ECO:0007669"/>
    <property type="project" value="UniProtKB-UniRule"/>
</dbReference>
<dbReference type="GO" id="GO:0042026">
    <property type="term" value="P:protein refolding"/>
    <property type="evidence" value="ECO:0007669"/>
    <property type="project" value="UniProtKB-UniRule"/>
</dbReference>
<dbReference type="CDD" id="cd03344">
    <property type="entry name" value="GroEL"/>
    <property type="match status" value="1"/>
</dbReference>
<dbReference type="FunFam" id="3.50.7.10:FF:000001">
    <property type="entry name" value="60 kDa chaperonin"/>
    <property type="match status" value="1"/>
</dbReference>
<dbReference type="Gene3D" id="3.50.7.10">
    <property type="entry name" value="GroEL"/>
    <property type="match status" value="1"/>
</dbReference>
<dbReference type="Gene3D" id="1.10.560.10">
    <property type="entry name" value="GroEL-like equatorial domain"/>
    <property type="match status" value="1"/>
</dbReference>
<dbReference type="Gene3D" id="3.30.260.10">
    <property type="entry name" value="TCP-1-like chaperonin intermediate domain"/>
    <property type="match status" value="1"/>
</dbReference>
<dbReference type="HAMAP" id="MF_00600">
    <property type="entry name" value="CH60"/>
    <property type="match status" value="1"/>
</dbReference>
<dbReference type="InterPro" id="IPR018370">
    <property type="entry name" value="Chaperonin_Cpn60_CS"/>
</dbReference>
<dbReference type="InterPro" id="IPR001844">
    <property type="entry name" value="Cpn60/GroEL"/>
</dbReference>
<dbReference type="InterPro" id="IPR002423">
    <property type="entry name" value="Cpn60/GroEL/TCP-1"/>
</dbReference>
<dbReference type="InterPro" id="IPR027409">
    <property type="entry name" value="GroEL-like_apical_dom_sf"/>
</dbReference>
<dbReference type="InterPro" id="IPR027413">
    <property type="entry name" value="GROEL-like_equatorial_sf"/>
</dbReference>
<dbReference type="InterPro" id="IPR027410">
    <property type="entry name" value="TCP-1-like_intermed_sf"/>
</dbReference>
<dbReference type="NCBIfam" id="TIGR02348">
    <property type="entry name" value="GroEL"/>
    <property type="match status" value="1"/>
</dbReference>
<dbReference type="NCBIfam" id="NF000592">
    <property type="entry name" value="PRK00013.1"/>
    <property type="match status" value="1"/>
</dbReference>
<dbReference type="NCBIfam" id="NF009487">
    <property type="entry name" value="PRK12849.1"/>
    <property type="match status" value="1"/>
</dbReference>
<dbReference type="NCBIfam" id="NF009488">
    <property type="entry name" value="PRK12850.1"/>
    <property type="match status" value="1"/>
</dbReference>
<dbReference type="NCBIfam" id="NF009489">
    <property type="entry name" value="PRK12851.1"/>
    <property type="match status" value="1"/>
</dbReference>
<dbReference type="PANTHER" id="PTHR45633">
    <property type="entry name" value="60 KDA HEAT SHOCK PROTEIN, MITOCHONDRIAL"/>
    <property type="match status" value="1"/>
</dbReference>
<dbReference type="Pfam" id="PF00118">
    <property type="entry name" value="Cpn60_TCP1"/>
    <property type="match status" value="1"/>
</dbReference>
<dbReference type="PRINTS" id="PR00298">
    <property type="entry name" value="CHAPERONIN60"/>
</dbReference>
<dbReference type="SUPFAM" id="SSF52029">
    <property type="entry name" value="GroEL apical domain-like"/>
    <property type="match status" value="1"/>
</dbReference>
<dbReference type="SUPFAM" id="SSF48592">
    <property type="entry name" value="GroEL equatorial domain-like"/>
    <property type="match status" value="1"/>
</dbReference>
<dbReference type="SUPFAM" id="SSF54849">
    <property type="entry name" value="GroEL-intermediate domain like"/>
    <property type="match status" value="1"/>
</dbReference>
<dbReference type="PROSITE" id="PS00296">
    <property type="entry name" value="CHAPERONINS_CPN60"/>
    <property type="match status" value="1"/>
</dbReference>
<name>CH60_LACE2</name>